<proteinExistence type="evidence at protein level"/>
<reference key="1">
    <citation type="journal article" date="1997" name="J. Biol. Chem.">
        <title>Cloning and characterization of two human isozymes of Mg2+-independent phosphatidic acid phosphatase.</title>
        <authorList>
            <person name="Kai M."/>
            <person name="Wada I."/>
            <person name="Imai S."/>
            <person name="Sakane F."/>
            <person name="Kanoh H."/>
        </authorList>
    </citation>
    <scope>NUCLEOTIDE SEQUENCE [MRNA] (ISOFORM 1)</scope>
    <scope>FUNCTION</scope>
    <scope>CATALYTIC ACTIVITY</scope>
    <scope>SUBSTRATE SPECIFICITY</scope>
    <scope>ACTIVITY REGULATION</scope>
    <scope>PATHWAY</scope>
    <scope>SUBCELLULAR LOCATION</scope>
    <scope>GLYCOSYLATION</scope>
    <scope>TISSUE SPECIFICITY</scope>
    <scope>CAUTION</scope>
</reference>
<reference key="2">
    <citation type="journal article" date="1998" name="DNA Cell Biol.">
        <title>Molecular cloning of two alternatively spliced forms of human phosphatidic acid phosphatase cDNAs that are differentially expressed in normal and tumor cells.</title>
        <authorList>
            <person name="Leung D.W."/>
            <person name="Tompkins C.K."/>
            <person name="White T."/>
        </authorList>
    </citation>
    <scope>NUCLEOTIDE SEQUENCE [MRNA] (ISOFORMS 1 AND 2)</scope>
    <scope>TISSUE SPECIFICITY</scope>
    <source>
        <tissue>Lung</tissue>
    </source>
</reference>
<reference key="3">
    <citation type="journal article" date="1998" name="J. Biol. Chem.">
        <title>Identification of the phosphatidic acid phosphatase type 2a isozyme as an androgen-regulated gene in the human prostatic Adenocarcinoma cell line LNCaP.</title>
        <authorList>
            <person name="Ulrix W.E.J."/>
            <person name="Swinnen J."/>
            <person name="Heyns W."/>
            <person name="Verhoeven G."/>
        </authorList>
    </citation>
    <scope>NUCLEOTIDE SEQUENCE [MRNA] (ISOFORM 1)</scope>
    <scope>INDUCTION</scope>
    <source>
        <tissue>Prostate</tissue>
    </source>
</reference>
<reference key="4">
    <citation type="journal article" date="1998" name="J. Biol. Chem.">
        <title>Human type 2 phosphatidic acid phosphohydrolases. Substrate specificity of the type 2a, 2b, and 2c enzymes and cell surface activity of the 2a isoform.</title>
        <authorList>
            <person name="Roberts R."/>
            <person name="Sciorra V.A."/>
            <person name="Morris A.J."/>
        </authorList>
    </citation>
    <scope>NUCLEOTIDE SEQUENCE [MRNA] (ISOFORM 1)</scope>
    <scope>FUNCTION</scope>
    <scope>CATALYTIC ACTIVITY</scope>
    <scope>BIOPHYSICOCHEMICAL PROPERTIES</scope>
    <scope>SUBSTRATE SPECIFICITY</scope>
    <scope>ACTIVITY REGULATION</scope>
    <scope>PATHWAY</scope>
    <scope>SUBCELLULAR LOCATION</scope>
</reference>
<reference key="5">
    <citation type="journal article" date="2004" name="Nature">
        <title>The DNA sequence and comparative analysis of human chromosome 5.</title>
        <authorList>
            <person name="Schmutz J."/>
            <person name="Martin J."/>
            <person name="Terry A."/>
            <person name="Couronne O."/>
            <person name="Grimwood J."/>
            <person name="Lowry S."/>
            <person name="Gordon L.A."/>
            <person name="Scott D."/>
            <person name="Xie G."/>
            <person name="Huang W."/>
            <person name="Hellsten U."/>
            <person name="Tran-Gyamfi M."/>
            <person name="She X."/>
            <person name="Prabhakar S."/>
            <person name="Aerts A."/>
            <person name="Altherr M."/>
            <person name="Bajorek E."/>
            <person name="Black S."/>
            <person name="Branscomb E."/>
            <person name="Caoile C."/>
            <person name="Challacombe J.F."/>
            <person name="Chan Y.M."/>
            <person name="Denys M."/>
            <person name="Detter J.C."/>
            <person name="Escobar J."/>
            <person name="Flowers D."/>
            <person name="Fotopulos D."/>
            <person name="Glavina T."/>
            <person name="Gomez M."/>
            <person name="Gonzales E."/>
            <person name="Goodstein D."/>
            <person name="Grigoriev I."/>
            <person name="Groza M."/>
            <person name="Hammon N."/>
            <person name="Hawkins T."/>
            <person name="Haydu L."/>
            <person name="Israni S."/>
            <person name="Jett J."/>
            <person name="Kadner K."/>
            <person name="Kimball H."/>
            <person name="Kobayashi A."/>
            <person name="Lopez F."/>
            <person name="Lou Y."/>
            <person name="Martinez D."/>
            <person name="Medina C."/>
            <person name="Morgan J."/>
            <person name="Nandkeshwar R."/>
            <person name="Noonan J.P."/>
            <person name="Pitluck S."/>
            <person name="Pollard M."/>
            <person name="Predki P."/>
            <person name="Priest J."/>
            <person name="Ramirez L."/>
            <person name="Retterer J."/>
            <person name="Rodriguez A."/>
            <person name="Rogers S."/>
            <person name="Salamov A."/>
            <person name="Salazar A."/>
            <person name="Thayer N."/>
            <person name="Tice H."/>
            <person name="Tsai M."/>
            <person name="Ustaszewska A."/>
            <person name="Vo N."/>
            <person name="Wheeler J."/>
            <person name="Wu K."/>
            <person name="Yang J."/>
            <person name="Dickson M."/>
            <person name="Cheng J.-F."/>
            <person name="Eichler E.E."/>
            <person name="Olsen A."/>
            <person name="Pennacchio L.A."/>
            <person name="Rokhsar D.S."/>
            <person name="Richardson P."/>
            <person name="Lucas S.M."/>
            <person name="Myers R.M."/>
            <person name="Rubin E.M."/>
        </authorList>
    </citation>
    <scope>NUCLEOTIDE SEQUENCE [LARGE SCALE GENOMIC DNA]</scope>
</reference>
<reference key="6">
    <citation type="submission" date="2005-07" db="EMBL/GenBank/DDBJ databases">
        <authorList>
            <person name="Mural R.J."/>
            <person name="Istrail S."/>
            <person name="Sutton G.G."/>
            <person name="Florea L."/>
            <person name="Halpern A.L."/>
            <person name="Mobarry C.M."/>
            <person name="Lippert R."/>
            <person name="Walenz B."/>
            <person name="Shatkay H."/>
            <person name="Dew I."/>
            <person name="Miller J.R."/>
            <person name="Flanigan M.J."/>
            <person name="Edwards N.J."/>
            <person name="Bolanos R."/>
            <person name="Fasulo D."/>
            <person name="Halldorsson B.V."/>
            <person name="Hannenhalli S."/>
            <person name="Turner R."/>
            <person name="Yooseph S."/>
            <person name="Lu F."/>
            <person name="Nusskern D.R."/>
            <person name="Shue B.C."/>
            <person name="Zheng X.H."/>
            <person name="Zhong F."/>
            <person name="Delcher A.L."/>
            <person name="Huson D.H."/>
            <person name="Kravitz S.A."/>
            <person name="Mouchard L."/>
            <person name="Reinert K."/>
            <person name="Remington K.A."/>
            <person name="Clark A.G."/>
            <person name="Waterman M.S."/>
            <person name="Eichler E.E."/>
            <person name="Adams M.D."/>
            <person name="Hunkapiller M.W."/>
            <person name="Myers E.W."/>
            <person name="Venter J.C."/>
        </authorList>
    </citation>
    <scope>NUCLEOTIDE SEQUENCE [LARGE SCALE GENOMIC DNA]</scope>
</reference>
<reference key="7">
    <citation type="journal article" date="2004" name="Genome Res.">
        <title>The status, quality, and expansion of the NIH full-length cDNA project: the Mammalian Gene Collection (MGC).</title>
        <authorList>
            <consortium name="The MGC Project Team"/>
        </authorList>
    </citation>
    <scope>NUCLEOTIDE SEQUENCE [LARGE SCALE MRNA] (ISOFORM 1)</scope>
    <source>
        <tissue>Brain</tissue>
    </source>
</reference>
<reference key="8">
    <citation type="journal article" date="1998" name="FEBS Lett.">
        <title>Identification of a novel human phosphatidic acid phosphatase type 2 isoform.</title>
        <authorList>
            <person name="Hooks S.B."/>
            <person name="Ragan S.P."/>
            <person name="Lynch K.R."/>
        </authorList>
    </citation>
    <scope>FUNCTION</scope>
    <scope>CATALYTIC ACTIVITY</scope>
    <scope>BIOPHYSICOCHEMICAL PROPERTIES</scope>
    <scope>SUBSTRATE SPECIFICITY</scope>
    <scope>PATHWAY</scope>
</reference>
<reference key="9">
    <citation type="journal article" date="2000" name="Biochim. Biophys. Acta">
        <title>Role of phosphatidic acid phosphatase 2a in uptake of extracellular lipid phosphate mediators.</title>
        <authorList>
            <person name="Roberts R.Z."/>
            <person name="Morris A.J."/>
        </authorList>
    </citation>
    <scope>FUNCTION</scope>
    <scope>CATALYTIC ACTIVITY</scope>
    <scope>ACTIVITY REGULATION</scope>
    <scope>PATHWAY</scope>
    <scope>SUBCELLULAR LOCATION</scope>
    <scope>GLYCOSYLATION</scope>
</reference>
<reference key="10">
    <citation type="journal article" date="2003" name="FEBS Lett.">
        <title>Differential localization of lipid phosphate phosphatases 1 and 3 to cell surface subdomains in polarized MDCK cells.</title>
        <authorList>
            <person name="Jia Y.J."/>
            <person name="Kai M."/>
            <person name="Wada I."/>
            <person name="Sakane F."/>
            <person name="Kanoh H."/>
        </authorList>
    </citation>
    <scope>SUBCELLULAR LOCATION</scope>
    <scope>MOTIF</scope>
</reference>
<reference key="11">
    <citation type="journal article" date="2003" name="J. Biol. Chem.">
        <title>Lipid phosphate phosphatases regulate lysophosphatidic acid production and signaling in platelets: studies using chemical inhibitors of lipid phosphate phosphatase activity.</title>
        <authorList>
            <person name="Smyth S.S."/>
            <person name="Sciorra V.A."/>
            <person name="Sigal Y.J."/>
            <person name="Pamulkar Z."/>
            <person name="Wang Z."/>
            <person name="Xu Y."/>
            <person name="Prestwich G.D."/>
            <person name="Morris A.J."/>
        </authorList>
    </citation>
    <scope>FUNCTION</scope>
</reference>
<reference key="12">
    <citation type="journal article" date="2005" name="Biochem. J.">
        <title>Lipid phosphate phosphatase-1 regulates lysophosphatidic acid-induced calcium release, NF-kappaB activation and interleukin-8 secretion in human bronchial epithelial cells.</title>
        <authorList>
            <person name="Zhao Y."/>
            <person name="Usatyuk P.V."/>
            <person name="Cummings R."/>
            <person name="Saatian B."/>
            <person name="He D."/>
            <person name="Watkins T."/>
            <person name="Morris A."/>
            <person name="Spannhake E.W."/>
            <person name="Brindley D.N."/>
            <person name="Natarajan V."/>
        </authorList>
    </citation>
    <scope>FUNCTION</scope>
    <scope>MUTAGENESIS OF ARG-217</scope>
</reference>
<reference key="13">
    <citation type="journal article" date="2006" name="J. Biochem.">
        <title>Lipid phosphate phosphatases 1 and 3 are localized in distinct lipid rafts.</title>
        <authorList>
            <person name="Kai M."/>
            <person name="Sakane F."/>
            <person name="Jia Y.J."/>
            <person name="Imai S."/>
            <person name="Yasuda S."/>
            <person name="Kanoh H."/>
        </authorList>
    </citation>
    <scope>SUBCELLULAR LOCATION</scope>
</reference>
<reference key="14">
    <citation type="journal article" date="2007" name="J. Biol. Chem.">
        <title>Intracellular generation of sphingosine 1-phosphate in human lung endothelial cells: role of lipid phosphate phosphatase-1 and sphingosine kinase 1.</title>
        <authorList>
            <person name="Zhao Y."/>
            <person name="Kalari S.K."/>
            <person name="Usatyuk P.V."/>
            <person name="Gorshkova I."/>
            <person name="He D."/>
            <person name="Watkins T."/>
            <person name="Brindley D.N."/>
            <person name="Sun C."/>
            <person name="Bittman R."/>
            <person name="Garcia J.G."/>
            <person name="Berdyshev E.V."/>
            <person name="Natarajan V."/>
        </authorList>
    </citation>
    <scope>FUNCTION</scope>
    <scope>CATALYTIC ACTIVITY</scope>
    <scope>PATHWAY</scope>
</reference>
<feature type="chain" id="PRO_0000220905" description="Phospholipid phosphatase 1">
    <location>
        <begin position="1"/>
        <end position="284"/>
    </location>
</feature>
<feature type="topological domain" description="Cytoplasmic" evidence="4">
    <location>
        <begin position="1"/>
        <end position="6"/>
    </location>
</feature>
<feature type="transmembrane region" description="Helical" evidence="5">
    <location>
        <begin position="7"/>
        <end position="27"/>
    </location>
</feature>
<feature type="topological domain" description="Extracellular" evidence="4">
    <location>
        <begin position="28"/>
        <end position="53"/>
    </location>
</feature>
<feature type="transmembrane region" description="Helical" evidence="5">
    <location>
        <begin position="54"/>
        <end position="74"/>
    </location>
</feature>
<feature type="topological domain" description="Cytoplasmic" evidence="4">
    <location>
        <begin position="75"/>
        <end position="94"/>
    </location>
</feature>
<feature type="transmembrane region" description="Helical" evidence="5">
    <location>
        <begin position="95"/>
        <end position="115"/>
    </location>
</feature>
<feature type="topological domain" description="Extracellular" evidence="4">
    <location>
        <begin position="116"/>
        <end position="164"/>
    </location>
</feature>
<feature type="transmembrane region" description="Helical" evidence="5">
    <location>
        <begin position="165"/>
        <end position="185"/>
    </location>
</feature>
<feature type="topological domain" description="Cytoplasmic" evidence="4">
    <location>
        <begin position="186"/>
        <end position="199"/>
    </location>
</feature>
<feature type="transmembrane region" description="Helical" evidence="5">
    <location>
        <begin position="200"/>
        <end position="220"/>
    </location>
</feature>
<feature type="topological domain" description="Extracellular" evidence="4">
    <location>
        <begin position="221"/>
        <end position="229"/>
    </location>
</feature>
<feature type="transmembrane region" description="Helical" evidence="5">
    <location>
        <begin position="230"/>
        <end position="250"/>
    </location>
</feature>
<feature type="topological domain" description="Cytoplasmic" evidence="4">
    <location>
        <begin position="251"/>
        <end position="284"/>
    </location>
</feature>
<feature type="region of interest" description="Phosphatase sequence motif I" evidence="2">
    <location>
        <begin position="120"/>
        <end position="128"/>
    </location>
</feature>
<feature type="region of interest" description="Phosphatase sequence motif II" evidence="2">
    <location>
        <begin position="168"/>
        <end position="171"/>
    </location>
</feature>
<feature type="region of interest" description="Phosphatase sequence motif III" evidence="2">
    <location>
        <begin position="216"/>
        <end position="227"/>
    </location>
</feature>
<feature type="region of interest" description="Disordered" evidence="6">
    <location>
        <begin position="260"/>
        <end position="284"/>
    </location>
</feature>
<feature type="short sequence motif" description="PDZ-binding; involved in localization to the apical cell membrane" evidence="9">
    <location>
        <begin position="5"/>
        <end position="7"/>
    </location>
</feature>
<feature type="compositionally biased region" description="Polar residues" evidence="6">
    <location>
        <begin position="269"/>
        <end position="284"/>
    </location>
</feature>
<feature type="active site" description="Proton donors" evidence="2">
    <location>
        <position position="171"/>
    </location>
</feature>
<feature type="active site" description="Nucleophile" evidence="2">
    <location>
        <position position="223"/>
    </location>
</feature>
<feature type="site" description="Stabilizes the active site histidine for nucleophilic attack" evidence="2">
    <location>
        <position position="227"/>
    </location>
</feature>
<feature type="glycosylation site" description="N-linked (GlcNAc...) asparagine" evidence="5">
    <location>
        <position position="142"/>
    </location>
</feature>
<feature type="splice variant" id="VSP_009651" description="In isoform 2." evidence="18">
    <original>GLPFAILTSRHTPFQRGVFCNDESIKYPYKEDTIPYALLGGIIIPFSIIV</original>
    <variation>SMPMAVLKLGQIYPFQRGFFCKDNSINYPYHDSTVTSTVLILVGVGLPISS</variation>
    <location>
        <begin position="21"/>
        <end position="70"/>
    </location>
</feature>
<feature type="mutagenesis site" description="Decreased lipid phosphatase activity." evidence="10">
    <original>R</original>
    <variation>K</variation>
    <location>
        <position position="217"/>
    </location>
</feature>
<feature type="sequence conflict" description="In Ref. 4; AAC32041." evidence="19" ref="4">
    <original>L</original>
    <variation>FTSRHI</variation>
    <location>
        <position position="27"/>
    </location>
</feature>
<feature type="sequence conflict" description="In Ref. 2; AAC16033." evidence="19" ref="2">
    <original>R</original>
    <variation>S</variation>
    <location>
        <position position="91"/>
    </location>
</feature>
<feature type="sequence conflict" description="In Ref. 2; AAC16033." evidence="19" ref="2">
    <original>V</original>
    <variation>A</variation>
    <location sequence="O14494-2">
        <position position="55"/>
    </location>
</feature>
<feature type="sequence conflict" description="In Ref. 2; AAC16033." evidence="19" ref="2">
    <original>T</original>
    <variation>A</variation>
    <location sequence="O14494-2">
        <position position="56"/>
    </location>
</feature>
<feature type="sequence conflict" description="In Ref. 2; AAC16033." evidence="19" ref="2">
    <original>I</original>
    <variation>V</variation>
    <location sequence="O14494-2">
        <position position="69"/>
    </location>
</feature>
<dbReference type="EC" id="3.1.3.-" evidence="7 12 13 16 17"/>
<dbReference type="EC" id="3.1.3.106" evidence="4"/>
<dbReference type="EC" id="3.1.3.4" evidence="7 13 16 17"/>
<dbReference type="EC" id="3.6.1.75" evidence="4"/>
<dbReference type="EMBL" id="AB000888">
    <property type="protein sequence ID" value="BAA22593.1"/>
    <property type="molecule type" value="mRNA"/>
</dbReference>
<dbReference type="EMBL" id="AF014402">
    <property type="protein sequence ID" value="AAC16032.1"/>
    <property type="molecule type" value="mRNA"/>
</dbReference>
<dbReference type="EMBL" id="AF014403">
    <property type="protein sequence ID" value="AAC16033.1"/>
    <property type="molecule type" value="mRNA"/>
</dbReference>
<dbReference type="EMBL" id="Y14436">
    <property type="protein sequence ID" value="CAC14588.1"/>
    <property type="molecule type" value="mRNA"/>
</dbReference>
<dbReference type="EMBL" id="AF017116">
    <property type="protein sequence ID" value="AAC32041.1"/>
    <property type="molecule type" value="mRNA"/>
</dbReference>
<dbReference type="EMBL" id="AC010480">
    <property type="status" value="NOT_ANNOTATED_CDS"/>
    <property type="molecule type" value="Genomic_DNA"/>
</dbReference>
<dbReference type="EMBL" id="AC025777">
    <property type="status" value="NOT_ANNOTATED_CDS"/>
    <property type="molecule type" value="Genomic_DNA"/>
</dbReference>
<dbReference type="EMBL" id="CH471123">
    <property type="protein sequence ID" value="EAW54920.1"/>
    <property type="molecule type" value="Genomic_DNA"/>
</dbReference>
<dbReference type="EMBL" id="CH471123">
    <property type="protein sequence ID" value="EAW54922.1"/>
    <property type="molecule type" value="Genomic_DNA"/>
</dbReference>
<dbReference type="EMBL" id="BC039847">
    <property type="protein sequence ID" value="AAH39847.1"/>
    <property type="molecule type" value="mRNA"/>
</dbReference>
<dbReference type="EMBL" id="BC117133">
    <property type="protein sequence ID" value="AAI17134.1"/>
    <property type="molecule type" value="mRNA"/>
</dbReference>
<dbReference type="EMBL" id="BC143281">
    <property type="protein sequence ID" value="AAI43282.1"/>
    <property type="molecule type" value="mRNA"/>
</dbReference>
<dbReference type="CCDS" id="CCDS34159.1">
    <molecule id="O14494-1"/>
</dbReference>
<dbReference type="CCDS" id="CCDS34160.1">
    <molecule id="O14494-2"/>
</dbReference>
<dbReference type="RefSeq" id="NP_003702.2">
    <molecule id="O14494-1"/>
    <property type="nucleotide sequence ID" value="NM_003711.3"/>
</dbReference>
<dbReference type="RefSeq" id="NP_795714.1">
    <molecule id="O14494-2"/>
    <property type="nucleotide sequence ID" value="NM_176895.3"/>
</dbReference>
<dbReference type="BioGRID" id="114169">
    <property type="interactions" value="34"/>
</dbReference>
<dbReference type="FunCoup" id="O14494">
    <property type="interactions" value="507"/>
</dbReference>
<dbReference type="IntAct" id="O14494">
    <property type="interactions" value="16"/>
</dbReference>
<dbReference type="MINT" id="O14494"/>
<dbReference type="STRING" id="9606.ENSP00000264775"/>
<dbReference type="SwissLipids" id="SLP:000000160"/>
<dbReference type="DEPOD" id="PLPP1"/>
<dbReference type="GlyCosmos" id="O14494">
    <property type="glycosylation" value="1 site, No reported glycans"/>
</dbReference>
<dbReference type="GlyGen" id="O14494">
    <property type="glycosylation" value="1 site"/>
</dbReference>
<dbReference type="iPTMnet" id="O14494"/>
<dbReference type="PhosphoSitePlus" id="O14494"/>
<dbReference type="SwissPalm" id="O14494"/>
<dbReference type="BioMuta" id="PLPP1"/>
<dbReference type="jPOST" id="O14494"/>
<dbReference type="MassIVE" id="O14494"/>
<dbReference type="PeptideAtlas" id="O14494"/>
<dbReference type="ProteomicsDB" id="33687"/>
<dbReference type="ProteomicsDB" id="48037">
    <molecule id="O14494-1"/>
</dbReference>
<dbReference type="ProteomicsDB" id="48038">
    <molecule id="O14494-2"/>
</dbReference>
<dbReference type="Pumba" id="O14494"/>
<dbReference type="Antibodypedia" id="11159">
    <property type="antibodies" value="186 antibodies from 27 providers"/>
</dbReference>
<dbReference type="DNASU" id="8611"/>
<dbReference type="Ensembl" id="ENST00000264775.9">
    <molecule id="O14494-2"/>
    <property type="protein sequence ID" value="ENSP00000264775.5"/>
    <property type="gene ID" value="ENSG00000067113.17"/>
</dbReference>
<dbReference type="Ensembl" id="ENST00000307259.9">
    <molecule id="O14494-1"/>
    <property type="protein sequence ID" value="ENSP00000302229.8"/>
    <property type="gene ID" value="ENSG00000067113.17"/>
</dbReference>
<dbReference type="GeneID" id="8611"/>
<dbReference type="KEGG" id="hsa:8611"/>
<dbReference type="MANE-Select" id="ENST00000307259.9">
    <property type="protein sequence ID" value="ENSP00000302229.8"/>
    <property type="RefSeq nucleotide sequence ID" value="NM_003711.4"/>
    <property type="RefSeq protein sequence ID" value="NP_003702.2"/>
</dbReference>
<dbReference type="UCSC" id="uc003jpz.5">
    <molecule id="O14494-1"/>
    <property type="organism name" value="human"/>
</dbReference>
<dbReference type="AGR" id="HGNC:9228"/>
<dbReference type="CTD" id="8611"/>
<dbReference type="DisGeNET" id="8611"/>
<dbReference type="GeneCards" id="PLPP1"/>
<dbReference type="HGNC" id="HGNC:9228">
    <property type="gene designation" value="PLPP1"/>
</dbReference>
<dbReference type="HPA" id="ENSG00000067113">
    <property type="expression patterns" value="Low tissue specificity"/>
</dbReference>
<dbReference type="MIM" id="607124">
    <property type="type" value="gene"/>
</dbReference>
<dbReference type="neXtProt" id="NX_O14494"/>
<dbReference type="OpenTargets" id="ENSG00000067113"/>
<dbReference type="PharmGKB" id="PA33552"/>
<dbReference type="VEuPathDB" id="HostDB:ENSG00000067113"/>
<dbReference type="GeneTree" id="ENSGT00940000156730"/>
<dbReference type="HOGENOM" id="CLU_021458_3_1_1"/>
<dbReference type="InParanoid" id="O14494"/>
<dbReference type="OMA" id="NQHRYIE"/>
<dbReference type="OrthoDB" id="8907274at2759"/>
<dbReference type="PAN-GO" id="O14494">
    <property type="GO annotations" value="6 GO annotations based on evolutionary models"/>
</dbReference>
<dbReference type="PhylomeDB" id="O14494"/>
<dbReference type="TreeFam" id="TF316040"/>
<dbReference type="PathwayCommons" id="O14494"/>
<dbReference type="Reactome" id="R-HSA-9845614">
    <property type="pathway name" value="Sphingolipid catabolism"/>
</dbReference>
<dbReference type="SignaLink" id="O14494"/>
<dbReference type="UniPathway" id="UPA00085"/>
<dbReference type="BioGRID-ORCS" id="8611">
    <property type="hits" value="19 hits in 1152 CRISPR screens"/>
</dbReference>
<dbReference type="ChiTaRS" id="PLPP1">
    <property type="organism name" value="human"/>
</dbReference>
<dbReference type="GeneWiki" id="PPAP2A"/>
<dbReference type="GenomeRNAi" id="8611"/>
<dbReference type="Pharos" id="O14494">
    <property type="development level" value="Tbio"/>
</dbReference>
<dbReference type="PRO" id="PR:O14494"/>
<dbReference type="Proteomes" id="UP000005640">
    <property type="component" value="Chromosome 5"/>
</dbReference>
<dbReference type="RNAct" id="O14494">
    <property type="molecule type" value="protein"/>
</dbReference>
<dbReference type="Bgee" id="ENSG00000067113">
    <property type="expression patterns" value="Expressed in decidua and 202 other cell types or tissues"/>
</dbReference>
<dbReference type="ExpressionAtlas" id="O14494">
    <property type="expression patterns" value="baseline and differential"/>
</dbReference>
<dbReference type="GO" id="GO:0016324">
    <property type="term" value="C:apical plasma membrane"/>
    <property type="evidence" value="ECO:0000314"/>
    <property type="project" value="UniProtKB"/>
</dbReference>
<dbReference type="GO" id="GO:0005901">
    <property type="term" value="C:caveola"/>
    <property type="evidence" value="ECO:0000250"/>
    <property type="project" value="UniProtKB"/>
</dbReference>
<dbReference type="GO" id="GO:0070062">
    <property type="term" value="C:extracellular exosome"/>
    <property type="evidence" value="ECO:0007005"/>
    <property type="project" value="UniProtKB"/>
</dbReference>
<dbReference type="GO" id="GO:0016020">
    <property type="term" value="C:membrane"/>
    <property type="evidence" value="ECO:0000314"/>
    <property type="project" value="UniProtKB"/>
</dbReference>
<dbReference type="GO" id="GO:0045121">
    <property type="term" value="C:membrane raft"/>
    <property type="evidence" value="ECO:0000314"/>
    <property type="project" value="UniProtKB"/>
</dbReference>
<dbReference type="GO" id="GO:0005886">
    <property type="term" value="C:plasma membrane"/>
    <property type="evidence" value="ECO:0000314"/>
    <property type="project" value="UniProtKB"/>
</dbReference>
<dbReference type="GO" id="GO:0106235">
    <property type="term" value="F:ceramide-1-phosphate phosphatase activity"/>
    <property type="evidence" value="ECO:0000314"/>
    <property type="project" value="UniProtKB"/>
</dbReference>
<dbReference type="GO" id="GO:0000810">
    <property type="term" value="F:diacylglycerol diphosphate phosphatase activity"/>
    <property type="evidence" value="ECO:0000250"/>
    <property type="project" value="UniProtKB"/>
</dbReference>
<dbReference type="GO" id="GO:0042577">
    <property type="term" value="F:lipid phosphatase activity"/>
    <property type="evidence" value="ECO:0000314"/>
    <property type="project" value="UniProtKB"/>
</dbReference>
<dbReference type="GO" id="GO:0052642">
    <property type="term" value="F:lysophosphatidic acid phosphatase activity"/>
    <property type="evidence" value="ECO:0007669"/>
    <property type="project" value="UniProtKB-EC"/>
</dbReference>
<dbReference type="GO" id="GO:0008195">
    <property type="term" value="F:phosphatidate phosphatase activity"/>
    <property type="evidence" value="ECO:0000314"/>
    <property type="project" value="UniProtKB"/>
</dbReference>
<dbReference type="GO" id="GO:0042392">
    <property type="term" value="F:sphingosine-1-phosphate phosphatase activity"/>
    <property type="evidence" value="ECO:0000314"/>
    <property type="project" value="UniProtKB"/>
</dbReference>
<dbReference type="GO" id="GO:0030521">
    <property type="term" value="P:androgen receptor signaling pathway"/>
    <property type="evidence" value="ECO:0000303"/>
    <property type="project" value="UniProtKB"/>
</dbReference>
<dbReference type="GO" id="GO:0006672">
    <property type="term" value="P:ceramide metabolic process"/>
    <property type="evidence" value="ECO:0000314"/>
    <property type="project" value="UniProtKB"/>
</dbReference>
<dbReference type="GO" id="GO:0008285">
    <property type="term" value="P:negative regulation of cell population proliferation"/>
    <property type="evidence" value="ECO:0000303"/>
    <property type="project" value="UniProtKB"/>
</dbReference>
<dbReference type="GO" id="GO:0030518">
    <property type="term" value="P:nuclear receptor-mediated steroid hormone signaling pathway"/>
    <property type="evidence" value="ECO:0000304"/>
    <property type="project" value="UniProtKB"/>
</dbReference>
<dbReference type="GO" id="GO:0007200">
    <property type="term" value="P:phospholipase C-activating G protein-coupled receptor signaling pathway"/>
    <property type="evidence" value="ECO:0000304"/>
    <property type="project" value="UniProtKB"/>
</dbReference>
<dbReference type="GO" id="GO:0046839">
    <property type="term" value="P:phospholipid dephosphorylation"/>
    <property type="evidence" value="ECO:0000314"/>
    <property type="project" value="UniProtKB"/>
</dbReference>
<dbReference type="GO" id="GO:0006644">
    <property type="term" value="P:phospholipid metabolic process"/>
    <property type="evidence" value="ECO:0000314"/>
    <property type="project" value="UniProtKB"/>
</dbReference>
<dbReference type="GO" id="GO:0019216">
    <property type="term" value="P:regulation of lipid metabolic process"/>
    <property type="evidence" value="ECO:0000303"/>
    <property type="project" value="UniProtKB"/>
</dbReference>
<dbReference type="GO" id="GO:0007165">
    <property type="term" value="P:signal transduction"/>
    <property type="evidence" value="ECO:0000315"/>
    <property type="project" value="UniProtKB"/>
</dbReference>
<dbReference type="GO" id="GO:0030149">
    <property type="term" value="P:sphingolipid catabolic process"/>
    <property type="evidence" value="ECO:0000304"/>
    <property type="project" value="Reactome"/>
</dbReference>
<dbReference type="GO" id="GO:0006670">
    <property type="term" value="P:sphingosine metabolic process"/>
    <property type="evidence" value="ECO:0000314"/>
    <property type="project" value="UniProtKB"/>
</dbReference>
<dbReference type="CDD" id="cd03384">
    <property type="entry name" value="PAP2_wunen"/>
    <property type="match status" value="1"/>
</dbReference>
<dbReference type="FunFam" id="1.20.144.10:FF:000007">
    <property type="entry name" value="phospholipid phosphatase 1 isoform X2"/>
    <property type="match status" value="1"/>
</dbReference>
<dbReference type="Gene3D" id="1.20.144.10">
    <property type="entry name" value="Phosphatidic acid phosphatase type 2/haloperoxidase"/>
    <property type="match status" value="1"/>
</dbReference>
<dbReference type="InterPro" id="IPR036938">
    <property type="entry name" value="P_Acid_Pase_2/haloperoxi_sf"/>
</dbReference>
<dbReference type="InterPro" id="IPR000326">
    <property type="entry name" value="P_Acid_Pase_2/haloperoxidase"/>
</dbReference>
<dbReference type="InterPro" id="IPR043216">
    <property type="entry name" value="PA_PP_rel"/>
</dbReference>
<dbReference type="PANTHER" id="PTHR10165">
    <property type="entry name" value="LIPID PHOSPHATE PHOSPHATASE"/>
    <property type="match status" value="1"/>
</dbReference>
<dbReference type="PANTHER" id="PTHR10165:SF26">
    <property type="entry name" value="PHOSPHOLIPID PHOSPHATASE 1"/>
    <property type="match status" value="1"/>
</dbReference>
<dbReference type="Pfam" id="PF01569">
    <property type="entry name" value="PAP2"/>
    <property type="match status" value="1"/>
</dbReference>
<dbReference type="SMART" id="SM00014">
    <property type="entry name" value="acidPPc"/>
    <property type="match status" value="1"/>
</dbReference>
<dbReference type="SUPFAM" id="SSF48317">
    <property type="entry name" value="Acid phosphatase/Vanadium-dependent haloperoxidase"/>
    <property type="match status" value="1"/>
</dbReference>
<gene>
    <name evidence="23" type="primary">PLPP1</name>
    <name type="synonym">LPP1</name>
    <name type="synonym">PPAP2A</name>
</gene>
<protein>
    <recommendedName>
        <fullName evidence="19">Phospholipid phosphatase 1</fullName>
        <ecNumber evidence="7 12 13 16 17">3.1.3.-</ecNumber>
        <ecNumber evidence="4">3.1.3.106</ecNumber>
        <ecNumber evidence="7 13 16 17">3.1.3.4</ecNumber>
        <ecNumber evidence="4">3.6.1.75</ecNumber>
    </recommendedName>
    <alternativeName>
        <fullName>Lipid phosphate phosphohydrolase 1</fullName>
    </alternativeName>
    <alternativeName>
        <fullName>PAP2-alpha</fullName>
    </alternativeName>
    <alternativeName>
        <fullName>Phosphatidate phosphohydrolase type 2a</fullName>
    </alternativeName>
    <alternativeName>
        <fullName>Phosphatidic acid phosphatase 2a</fullName>
        <shortName>PAP-2a</shortName>
        <shortName>PAP2a</shortName>
    </alternativeName>
</protein>
<sequence length="284" mass="32156">MFDKTRLPYVALDVLCVLLAGLPFAILTSRHTPFQRGVFCNDESIKYPYKEDTIPYALLGGIIIPFSIIVIILGETLSVYCNLLHSNSFIRNNYIATIYKAIGTFLFGAAASQSLTDIAKYSIGRLRPHFLDVCDPDWSKINCSDGYIEYYICRGNAERVKEGRLSFYSGHSSFSMYCMLFVALYLQARMKGDWARLLRPTLQFGLVAVSIYVGLSRVSDYKHHWSDVLTGLIQGALVAILVAVYVSDFFKERTSFKERKEEDSHTTLHETPTTGNHYPSNHQP</sequence>
<organism>
    <name type="scientific">Homo sapiens</name>
    <name type="common">Human</name>
    <dbReference type="NCBI Taxonomy" id="9606"/>
    <lineage>
        <taxon>Eukaryota</taxon>
        <taxon>Metazoa</taxon>
        <taxon>Chordata</taxon>
        <taxon>Craniata</taxon>
        <taxon>Vertebrata</taxon>
        <taxon>Euteleostomi</taxon>
        <taxon>Mammalia</taxon>
        <taxon>Eutheria</taxon>
        <taxon>Euarchontoglires</taxon>
        <taxon>Primates</taxon>
        <taxon>Haplorrhini</taxon>
        <taxon>Catarrhini</taxon>
        <taxon>Hominidae</taxon>
        <taxon>Homo</taxon>
    </lineage>
</organism>
<name>PLPP1_HUMAN</name>
<evidence type="ECO:0000250" key="1">
    <source>
        <dbReference type="UniProtKB" id="O08564"/>
    </source>
</evidence>
<evidence type="ECO:0000250" key="2">
    <source>
        <dbReference type="UniProtKB" id="O34349"/>
    </source>
</evidence>
<evidence type="ECO:0000250" key="3">
    <source>
        <dbReference type="UniProtKB" id="O88956"/>
    </source>
</evidence>
<evidence type="ECO:0000250" key="4">
    <source>
        <dbReference type="UniProtKB" id="Q61469"/>
    </source>
</evidence>
<evidence type="ECO:0000255" key="5"/>
<evidence type="ECO:0000256" key="6">
    <source>
        <dbReference type="SAM" id="MobiDB-lite"/>
    </source>
</evidence>
<evidence type="ECO:0000269" key="7">
    <source>
    </source>
</evidence>
<evidence type="ECO:0000269" key="8">
    <source>
    </source>
</evidence>
<evidence type="ECO:0000269" key="9">
    <source>
    </source>
</evidence>
<evidence type="ECO:0000269" key="10">
    <source>
    </source>
</evidence>
<evidence type="ECO:0000269" key="11">
    <source>
    </source>
</evidence>
<evidence type="ECO:0000269" key="12">
    <source>
    </source>
</evidence>
<evidence type="ECO:0000269" key="13">
    <source>
    </source>
</evidence>
<evidence type="ECO:0000269" key="14">
    <source>
    </source>
</evidence>
<evidence type="ECO:0000269" key="15">
    <source>
    </source>
</evidence>
<evidence type="ECO:0000269" key="16">
    <source>
    </source>
</evidence>
<evidence type="ECO:0000269" key="17">
    <source>
    </source>
</evidence>
<evidence type="ECO:0000303" key="18">
    <source>
    </source>
</evidence>
<evidence type="ECO:0000305" key="19"/>
<evidence type="ECO:0000305" key="20">
    <source>
    </source>
</evidence>
<evidence type="ECO:0000305" key="21">
    <source>
    </source>
</evidence>
<evidence type="ECO:0000305" key="22">
    <source>
    </source>
</evidence>
<evidence type="ECO:0000312" key="23">
    <source>
        <dbReference type="HGNC" id="HGNC:9228"/>
    </source>
</evidence>
<keyword id="KW-0025">Alternative splicing</keyword>
<keyword id="KW-1003">Cell membrane</keyword>
<keyword id="KW-0325">Glycoprotein</keyword>
<keyword id="KW-0378">Hydrolase</keyword>
<keyword id="KW-0443">Lipid metabolism</keyword>
<keyword id="KW-0472">Membrane</keyword>
<keyword id="KW-1267">Proteomics identification</keyword>
<keyword id="KW-1185">Reference proteome</keyword>
<keyword id="KW-0812">Transmembrane</keyword>
<keyword id="KW-1133">Transmembrane helix</keyword>
<accession>O14494</accession>
<accession>B7ZKN8</accession>
<accession>G3XA95</accession>
<accession>O60457</accession>
<accession>O60463</accession>
<accession>Q17RZ4</accession>
<comment type="function">
    <text evidence="1 7 8 10 12 13 16 17">Magnesium-independent phospholipid phosphatase of the plasma membrane that catalyzes the dephosphorylation of a variety of glycerolipid and sphingolipid phosphate esters including phosphatidate/PA, lysophosphatidate/LPA, diacylglycerol pyrophosphate/DGPP, sphingosine 1-phosphate/S1P and ceramide 1-phosphate/C1P (PubMed:10962286, PubMed:17379599, PubMed:9305923, PubMed:9607309, PubMed:9705349). Also acts on N-oleoyl ethanolamine phosphate/N-(9Z-octadecenoyl)-ethanolamine phosphate, a potential physiological compound (PubMed:9607309). Through its extracellular phosphatase activity allows both the hydrolysis and the cellular uptake of these bioactive lipid mediators from the milieu, regulating signal transduction in different cellular processes (PubMed:10962286, PubMed:12909631, PubMed:15461590, PubMed:17379599). It is for instance essential for the extracellular hydrolysis of S1P and subsequent conversion into intracellular S1P (PubMed:17379599). Involved in the regulation of inflammation, platelets activation, cell proliferation and migration among other processes (PubMed:12909631, PubMed:15461590). May also have an intracellular activity to regulate phospholipid-mediated signaling pathways (By similarity).</text>
</comment>
<comment type="catalytic activity">
    <reaction evidence="7 13 16 17">
        <text>a 1,2-diacyl-sn-glycero-3-phosphate + H2O = a 1,2-diacyl-sn-glycerol + phosphate</text>
        <dbReference type="Rhea" id="RHEA:27429"/>
        <dbReference type="ChEBI" id="CHEBI:15377"/>
        <dbReference type="ChEBI" id="CHEBI:17815"/>
        <dbReference type="ChEBI" id="CHEBI:43474"/>
        <dbReference type="ChEBI" id="CHEBI:58608"/>
        <dbReference type="EC" id="3.1.3.4"/>
    </reaction>
    <physiologicalReaction direction="left-to-right" evidence="20">
        <dbReference type="Rhea" id="RHEA:27430"/>
    </physiologicalReaction>
</comment>
<comment type="catalytic activity">
    <reaction evidence="17">
        <text>1,2-dihexadecanoyl-sn-glycero-3-phosphate + H2O = 1,2-dihexadecanoyl-sn-glycerol + phosphate</text>
        <dbReference type="Rhea" id="RHEA:43236"/>
        <dbReference type="ChEBI" id="CHEBI:15377"/>
        <dbReference type="ChEBI" id="CHEBI:43474"/>
        <dbReference type="ChEBI" id="CHEBI:72859"/>
        <dbReference type="ChEBI" id="CHEBI:82929"/>
    </reaction>
    <physiologicalReaction direction="left-to-right" evidence="22">
        <dbReference type="Rhea" id="RHEA:43237"/>
    </physiologicalReaction>
</comment>
<comment type="catalytic activity">
    <reaction evidence="13 16">
        <text>1,2-di-(9Z-octadecenoyl)-sn-glycero-3-phosphate + H2O = 1,2-di-(9Z-octadecenoyl)-sn-glycerol + phosphate</text>
        <dbReference type="Rhea" id="RHEA:43244"/>
        <dbReference type="ChEBI" id="CHEBI:15377"/>
        <dbReference type="ChEBI" id="CHEBI:43474"/>
        <dbReference type="ChEBI" id="CHEBI:52333"/>
        <dbReference type="ChEBI" id="CHEBI:74546"/>
    </reaction>
    <physiologicalReaction direction="left-to-right" evidence="20">
        <dbReference type="Rhea" id="RHEA:43245"/>
    </physiologicalReaction>
</comment>
<comment type="catalytic activity">
    <reaction evidence="7 13 16 17">
        <text>a monoacyl-sn-glycero-3-phosphate + H2O = a monoacylglycerol + phosphate</text>
        <dbReference type="Rhea" id="RHEA:46736"/>
        <dbReference type="ChEBI" id="CHEBI:15377"/>
        <dbReference type="ChEBI" id="CHEBI:17408"/>
        <dbReference type="ChEBI" id="CHEBI:43474"/>
        <dbReference type="ChEBI" id="CHEBI:77589"/>
    </reaction>
    <physiologicalReaction direction="left-to-right" evidence="20">
        <dbReference type="Rhea" id="RHEA:46737"/>
    </physiologicalReaction>
</comment>
<comment type="catalytic activity">
    <reaction evidence="13 16 17">
        <text>(9Z)-octadecenoyl-sn-glycero-3-phosphate + H2O = (9Z-octadecenoyl)-glycerol + phosphate</text>
        <dbReference type="Rhea" id="RHEA:50884"/>
        <dbReference type="ChEBI" id="CHEBI:15377"/>
        <dbReference type="ChEBI" id="CHEBI:43474"/>
        <dbReference type="ChEBI" id="CHEBI:75937"/>
        <dbReference type="ChEBI" id="CHEBI:84973"/>
    </reaction>
    <physiologicalReaction direction="left-to-right" evidence="20">
        <dbReference type="Rhea" id="RHEA:50885"/>
    </physiologicalReaction>
</comment>
<comment type="catalytic activity">
    <reaction evidence="4">
        <text>a 1-acyl-sn-glycero-3-phosphate + H2O = a 1-acyl-sn-glycerol + phosphate</text>
        <dbReference type="Rhea" id="RHEA:33155"/>
        <dbReference type="ChEBI" id="CHEBI:15377"/>
        <dbReference type="ChEBI" id="CHEBI:43474"/>
        <dbReference type="ChEBI" id="CHEBI:57970"/>
        <dbReference type="ChEBI" id="CHEBI:64683"/>
        <dbReference type="EC" id="3.1.3.106"/>
    </reaction>
    <physiologicalReaction direction="left-to-right" evidence="4">
        <dbReference type="Rhea" id="RHEA:33156"/>
    </physiologicalReaction>
</comment>
<comment type="catalytic activity">
    <reaction evidence="4">
        <text>1-(9Z-octadecenoyl)-sn-glycero-3-phosphate + H2O = 1-(9Z-octadecenoyl)-sn-glycerol + phosphate</text>
        <dbReference type="Rhea" id="RHEA:39835"/>
        <dbReference type="ChEBI" id="CHEBI:15377"/>
        <dbReference type="ChEBI" id="CHEBI:43474"/>
        <dbReference type="ChEBI" id="CHEBI:74544"/>
        <dbReference type="ChEBI" id="CHEBI:75757"/>
    </reaction>
    <physiologicalReaction direction="left-to-right" evidence="4">
        <dbReference type="Rhea" id="RHEA:39836"/>
    </physiologicalReaction>
</comment>
<comment type="catalytic activity">
    <reaction evidence="4">
        <text>a 1,2-diacyl-sn-glycerol 3-diphosphate + H2O = a 1,2-diacyl-sn-glycero-3-phosphate + phosphate + H(+)</text>
        <dbReference type="Rhea" id="RHEA:27449"/>
        <dbReference type="ChEBI" id="CHEBI:15377"/>
        <dbReference type="ChEBI" id="CHEBI:15378"/>
        <dbReference type="ChEBI" id="CHEBI:43474"/>
        <dbReference type="ChEBI" id="CHEBI:58608"/>
        <dbReference type="ChEBI" id="CHEBI:59996"/>
        <dbReference type="EC" id="3.6.1.75"/>
    </reaction>
    <physiologicalReaction direction="left-to-right" evidence="4">
        <dbReference type="Rhea" id="RHEA:27450"/>
    </physiologicalReaction>
</comment>
<comment type="catalytic activity">
    <reaction evidence="12 17">
        <text>sphing-4-enine 1-phosphate + H2O = sphing-4-enine + phosphate</text>
        <dbReference type="Rhea" id="RHEA:27518"/>
        <dbReference type="ChEBI" id="CHEBI:15377"/>
        <dbReference type="ChEBI" id="CHEBI:43474"/>
        <dbReference type="ChEBI" id="CHEBI:57756"/>
        <dbReference type="ChEBI" id="CHEBI:60119"/>
    </reaction>
    <physiologicalReaction direction="left-to-right" evidence="22">
        <dbReference type="Rhea" id="RHEA:27519"/>
    </physiologicalReaction>
</comment>
<comment type="catalytic activity">
    <reaction evidence="13 17">
        <text>an N-acylsphing-4-enine 1-phosphate + H2O = an N-acylsphing-4-enine + phosphate</text>
        <dbReference type="Rhea" id="RHEA:33743"/>
        <dbReference type="ChEBI" id="CHEBI:15377"/>
        <dbReference type="ChEBI" id="CHEBI:43474"/>
        <dbReference type="ChEBI" id="CHEBI:52639"/>
        <dbReference type="ChEBI" id="CHEBI:57674"/>
    </reaction>
    <physiologicalReaction direction="left-to-right" evidence="20">
        <dbReference type="Rhea" id="RHEA:33744"/>
    </physiologicalReaction>
</comment>
<comment type="catalytic activity">
    <reaction evidence="17">
        <text>N-(octanoyl)-sphing-4-enine-1-phosphate + H2O = N-octanoylsphing-4-enine + phosphate</text>
        <dbReference type="Rhea" id="RHEA:62040"/>
        <dbReference type="ChEBI" id="CHEBI:15377"/>
        <dbReference type="ChEBI" id="CHEBI:43474"/>
        <dbReference type="ChEBI" id="CHEBI:45815"/>
        <dbReference type="ChEBI" id="CHEBI:85376"/>
    </reaction>
    <physiologicalReaction direction="left-to-right" evidence="22">
        <dbReference type="Rhea" id="RHEA:62041"/>
    </physiologicalReaction>
</comment>
<comment type="catalytic activity">
    <reaction evidence="16">
        <text>N-(9Z-octadecenoyl)-ethanolamine phosphate + H2O = N-(9Z-octadecenoyl) ethanolamine + phosphate</text>
        <dbReference type="Rhea" id="RHEA:62160"/>
        <dbReference type="ChEBI" id="CHEBI:15377"/>
        <dbReference type="ChEBI" id="CHEBI:43474"/>
        <dbReference type="ChEBI" id="CHEBI:71466"/>
        <dbReference type="ChEBI" id="CHEBI:145465"/>
    </reaction>
    <physiologicalReaction direction="left-to-right" evidence="21">
        <dbReference type="Rhea" id="RHEA:62161"/>
    </physiologicalReaction>
</comment>
<comment type="catalytic activity">
    <reaction evidence="1">
        <text>1-hexadecanoyl-2-(9Z-octadecenoyl)-sn-glycero-3-phosphate + H2O = 1-hexadecanoyl-2-(9Z-octadecenoyl)-sn-glycerol + phosphate</text>
        <dbReference type="Rhea" id="RHEA:41255"/>
        <dbReference type="ChEBI" id="CHEBI:15377"/>
        <dbReference type="ChEBI" id="CHEBI:43474"/>
        <dbReference type="ChEBI" id="CHEBI:64839"/>
        <dbReference type="ChEBI" id="CHEBI:75466"/>
    </reaction>
    <physiologicalReaction direction="left-to-right" evidence="1">
        <dbReference type="Rhea" id="RHEA:41256"/>
    </physiologicalReaction>
</comment>
<comment type="activity regulation">
    <text evidence="7 13 17">Magnesium-independent phospholipid phosphatase (PubMed:9305923). Insensitive to N-ethylmaleimide (PubMed:9305923). Inhibited by sphingosine, zinc ions and modestly by propanolol (PubMed:9305923, PubMed:9705349). Inhibited by vanadate (PubMed:10962286).</text>
</comment>
<comment type="biophysicochemical properties">
    <kinetics>
        <KM evidence="16">98 uM for 1,2-di-(9Z-octadecenoyl)-sn-glycero-3-phosphate</KM>
        <KM evidence="16">170 uM for (9Z)-octadecenoyl-sn-glycero-3-phosphate</KM>
        <KM evidence="16">116 uM for N-(9Z-octadecenoyl)-ethanolamine phosphate</KM>
        <Vmax evidence="17">0.54 nmol/min/mg enzyme with 1,2-dihexadecanoyl-sn-glycero-3-phosphate as substrate</Vmax>
        <Vmax evidence="17">0.5 nmol/min/mg enzyme with (9Z)-octadecenoyl-sn-glycero-3-phosphate as substrate</Vmax>
        <Vmax evidence="17">0.3 nmol/min/mg enzyme with N-(octanoyl)-sphing-4-enine-1-phosphate as substrate</Vmax>
        <Vmax evidence="17">0.32 nmol/min/mg enzyme with sphing-4-enine 1-phosphate as substrate</Vmax>
        <Vmax evidence="16">41.0 nmol/min/mg enzyme with 1,2-di-(9Z-octadecenoyl)-sn-glycero-3-phosphate as substrate</Vmax>
        <Vmax evidence="16">33.0 nmol/min/mg enzyme with (9Z)-octadecenoyl-sn-glycero-3-phosphate as substrate</Vmax>
        <Vmax evidence="16">29.0 nmol/min/mg enzyme with N-(9Z-octadecenoyl)-ethanolamine phosphate as substrate</Vmax>
    </kinetics>
</comment>
<comment type="pathway">
    <text evidence="7 13 16 17">Lipid metabolism; phospholipid metabolism.</text>
</comment>
<comment type="subunit">
    <text evidence="3 4">Forms functional homodimers and homooligomers that are not required for substrate recognition and catalytic activity (By similarity). Can also form heterooligomers with PLPP2 and PLPP3 (By similarity).</text>
</comment>
<comment type="interaction">
    <interactant intactId="EBI-2865290">
        <id>O14494</id>
    </interactant>
    <interactant intactId="EBI-77613">
        <id>P05067</id>
        <label>APP</label>
    </interactant>
    <organismsDiffer>false</organismsDiffer>
    <experiments>3</experiments>
</comment>
<comment type="interaction">
    <interactant intactId="EBI-2865290">
        <id>O14494</id>
    </interactant>
    <interactant intactId="EBI-1383687">
        <id>Q9UQM7</id>
        <label>CAMK2A</label>
    </interactant>
    <organismsDiffer>false</organismsDiffer>
    <experiments>3</experiments>
</comment>
<comment type="interaction">
    <interactant intactId="EBI-2865290">
        <id>O14494</id>
    </interactant>
    <interactant intactId="EBI-12248206">
        <id>P29466-3</id>
        <label>CASP1</label>
    </interactant>
    <organismsDiffer>false</organismsDiffer>
    <experiments>3</experiments>
</comment>
<comment type="interaction">
    <interactant intactId="EBI-2865290">
        <id>O14494</id>
    </interactant>
    <interactant intactId="EBI-9087876">
        <id>P48730-2</id>
        <label>CSNK1D</label>
    </interactant>
    <organismsDiffer>false</organismsDiffer>
    <experiments>3</experiments>
</comment>
<comment type="interaction">
    <interactant intactId="EBI-2865290">
        <id>O14494</id>
    </interactant>
    <interactant intactId="EBI-18076404">
        <id>O15529</id>
        <label>GPR42</label>
    </interactant>
    <organismsDiffer>false</organismsDiffer>
    <experiments>3</experiments>
</comment>
<comment type="interaction">
    <interactant intactId="EBI-2865290">
        <id>O14494</id>
    </interactant>
    <interactant intactId="EBI-476586">
        <id>P17612</id>
        <label>PRKACA</label>
    </interactant>
    <organismsDiffer>false</organismsDiffer>
    <experiments>3</experiments>
</comment>
<comment type="interaction">
    <interactant intactId="EBI-2865290">
        <id>O14494</id>
    </interactant>
    <interactant intactId="EBI-11047108">
        <id>P49768-2</id>
        <label>PSEN1</label>
    </interactant>
    <organismsDiffer>false</organismsDiffer>
    <experiments>3</experiments>
</comment>
<comment type="interaction">
    <interactant intactId="EBI-2865290">
        <id>O14494</id>
    </interactant>
    <interactant intactId="EBI-17280858">
        <id>Q8WWF3</id>
        <label>SSMEM1</label>
    </interactant>
    <organismsDiffer>false</organismsDiffer>
    <experiments>3</experiments>
</comment>
<comment type="interaction">
    <interactant intactId="EBI-2865290">
        <id>O14494</id>
    </interactant>
    <interactant intactId="EBI-714215">
        <id>Q15583</id>
        <label>TGIF1</label>
    </interactant>
    <organismsDiffer>false</organismsDiffer>
    <experiments>3</experiments>
</comment>
<comment type="subcellular location">
    <subcellularLocation>
        <location evidence="7 17">Cell membrane</location>
        <topology evidence="5">Multi-pass membrane protein</topology>
    </subcellularLocation>
    <subcellularLocation>
        <location evidence="9">Apical cell membrane</location>
        <topology evidence="5">Multi-pass membrane protein</topology>
    </subcellularLocation>
    <subcellularLocation>
        <location evidence="11">Membrane raft</location>
        <topology evidence="5">Multi-pass membrane protein</topology>
    </subcellularLocation>
    <subcellularLocation>
        <location evidence="4">Membrane</location>
        <location evidence="4">Caveola</location>
        <topology evidence="5">Multi-pass membrane protein</topology>
    </subcellularLocation>
</comment>
<comment type="alternative products">
    <event type="alternative splicing"/>
    <isoform>
        <id>O14494-1</id>
        <name>1</name>
        <name>Alpha-1</name>
        <name>hLPP1</name>
        <name>PAP2-a1</name>
        <sequence type="displayed"/>
    </isoform>
    <isoform>
        <id>O14494-2</id>
        <name>2</name>
        <name>Alpha-2</name>
        <name>hLPP1-a</name>
        <name>PAP2-a2</name>
        <sequence type="described" ref="VSP_009651"/>
    </isoform>
    <text>Additional isoforms seem to exist.</text>
</comment>
<comment type="tissue specificity">
    <text evidence="13 15">Widely expressed with highest expression found in prostate (PubMed:9305923). Found to be down-regulated in colon adenocarcinomas (PubMed:9570154).</text>
</comment>
<comment type="tissue specificity">
    <molecule>Isoform 1</molecule>
    <text evidence="15">Predominant in kidney, lung, placenta and liver.</text>
</comment>
<comment type="tissue specificity">
    <molecule>Isoform 2</molecule>
    <text evidence="15">Predominant in heart and pancreas.</text>
</comment>
<comment type="induction">
    <text evidence="14">By androgens.</text>
</comment>
<comment type="PTM">
    <text evidence="4 7 13">N-glycosylated (PubMed:10962286, PubMed:9305923). N-linked sugars are of the complex type. N-glycosylation is not required for the phosphatase activity (By similarity).</text>
</comment>
<comment type="similarity">
    <text evidence="19">Belongs to the PA-phosphatase related phosphoesterase family.</text>
</comment>
<comment type="caution">
    <text evidence="13">Some reports could not detect a significant activity with sphingosine 1-phosphate as substrate.</text>
</comment>